<accession>Q84VQ3</accession>
<accession>Q6ICZ5</accession>
<comment type="function">
    <text evidence="7">CIPK serine-threonine protein kinases interact with CBL proteins. Binding of a CBL protein to the regulatory NAF domain of CIPK protein lead to the activation of the kinase in a calcium-dependent manner. Involved in the calcium-dependent regulation of reactive oxygen species production by the NADPH oxidase RBOHF.</text>
</comment>
<comment type="catalytic activity">
    <reaction>
        <text>L-seryl-[protein] + ATP = O-phospho-L-seryl-[protein] + ADP + H(+)</text>
        <dbReference type="Rhea" id="RHEA:17989"/>
        <dbReference type="Rhea" id="RHEA-COMP:9863"/>
        <dbReference type="Rhea" id="RHEA-COMP:11604"/>
        <dbReference type="ChEBI" id="CHEBI:15378"/>
        <dbReference type="ChEBI" id="CHEBI:29999"/>
        <dbReference type="ChEBI" id="CHEBI:30616"/>
        <dbReference type="ChEBI" id="CHEBI:83421"/>
        <dbReference type="ChEBI" id="CHEBI:456216"/>
        <dbReference type="EC" id="2.7.11.1"/>
    </reaction>
</comment>
<comment type="catalytic activity">
    <reaction>
        <text>L-threonyl-[protein] + ATP = O-phospho-L-threonyl-[protein] + ADP + H(+)</text>
        <dbReference type="Rhea" id="RHEA:46608"/>
        <dbReference type="Rhea" id="RHEA-COMP:11060"/>
        <dbReference type="Rhea" id="RHEA-COMP:11605"/>
        <dbReference type="ChEBI" id="CHEBI:15378"/>
        <dbReference type="ChEBI" id="CHEBI:30013"/>
        <dbReference type="ChEBI" id="CHEBI:30616"/>
        <dbReference type="ChEBI" id="CHEBI:61977"/>
        <dbReference type="ChEBI" id="CHEBI:456216"/>
        <dbReference type="EC" id="2.7.11.1"/>
    </reaction>
</comment>
<comment type="cofactor">
    <cofactor evidence="1">
        <name>Mn(2+)</name>
        <dbReference type="ChEBI" id="CHEBI:29035"/>
    </cofactor>
</comment>
<comment type="subunit">
    <text evidence="7">Interacts with RBOHF (via N-terminus).</text>
</comment>
<comment type="subcellular location">
    <subcellularLocation>
        <location evidence="7">Cell membrane</location>
    </subcellularLocation>
</comment>
<comment type="domain">
    <text evidence="1">The activation loop within the kinase domain is the target of phosphorylation/activation by upstream protein kinases. The PPI motif mediates the interaction with the ABI (abscisic acid-insensitive) phosphatases (By similarity).</text>
</comment>
<comment type="similarity">
    <text evidence="8">Belongs to the protein kinase superfamily. CAMK Ser/Thr protein kinase family. SNF1 subfamily.</text>
</comment>
<comment type="sequence caution" evidence="8">
    <conflict type="erroneous gene model prediction">
        <sequence resource="EMBL-CDS" id="AAO73884"/>
    </conflict>
</comment>
<dbReference type="EC" id="2.7.11.1"/>
<dbReference type="EMBL" id="AC140977">
    <property type="protein sequence ID" value="AAO73884.1"/>
    <property type="status" value="ALT_SEQ"/>
    <property type="molecule type" value="Genomic_DNA"/>
</dbReference>
<dbReference type="EMBL" id="CP002688">
    <property type="protein sequence ID" value="AED92948.1"/>
    <property type="molecule type" value="Genomic_DNA"/>
</dbReference>
<dbReference type="EMBL" id="BT014878">
    <property type="protein sequence ID" value="AAT41861.1"/>
    <property type="molecule type" value="mRNA"/>
</dbReference>
<dbReference type="RefSeq" id="NP_850861.2">
    <property type="nucleotide sequence ID" value="NM_180530.3"/>
</dbReference>
<dbReference type="SMR" id="Q84VQ3"/>
<dbReference type="BioGRID" id="17521">
    <property type="interactions" value="13"/>
</dbReference>
<dbReference type="FunCoup" id="Q84VQ3">
    <property type="interactions" value="1486"/>
</dbReference>
<dbReference type="STRING" id="3702.Q84VQ3"/>
<dbReference type="iPTMnet" id="Q84VQ3"/>
<dbReference type="PaxDb" id="3702-AT5G21326.1"/>
<dbReference type="ProteomicsDB" id="246692"/>
<dbReference type="EnsemblPlants" id="AT5G21326.1">
    <property type="protein sequence ID" value="AT5G21326.1"/>
    <property type="gene ID" value="AT5G21326"/>
</dbReference>
<dbReference type="GeneID" id="832246"/>
<dbReference type="Gramene" id="AT5G21326.1">
    <property type="protein sequence ID" value="AT5G21326.1"/>
    <property type="gene ID" value="AT5G21326"/>
</dbReference>
<dbReference type="KEGG" id="ath:AT5G21326"/>
<dbReference type="Araport" id="AT5G21326"/>
<dbReference type="TAIR" id="AT5G21326">
    <property type="gene designation" value="CIPK26"/>
</dbReference>
<dbReference type="eggNOG" id="KOG0583">
    <property type="taxonomic scope" value="Eukaryota"/>
</dbReference>
<dbReference type="HOGENOM" id="CLU_000288_59_0_1"/>
<dbReference type="InParanoid" id="Q84VQ3"/>
<dbReference type="OMA" id="HGRMMEN"/>
<dbReference type="OrthoDB" id="193931at2759"/>
<dbReference type="PhylomeDB" id="Q84VQ3"/>
<dbReference type="CD-CODE" id="4299E36E">
    <property type="entry name" value="Nucleolus"/>
</dbReference>
<dbReference type="PRO" id="PR:Q84VQ3"/>
<dbReference type="Proteomes" id="UP000006548">
    <property type="component" value="Chromosome 5"/>
</dbReference>
<dbReference type="ExpressionAtlas" id="Q84VQ3">
    <property type="expression patterns" value="baseline and differential"/>
</dbReference>
<dbReference type="GO" id="GO:0005886">
    <property type="term" value="C:plasma membrane"/>
    <property type="evidence" value="ECO:0007669"/>
    <property type="project" value="UniProtKB-SubCell"/>
</dbReference>
<dbReference type="GO" id="GO:0009536">
    <property type="term" value="C:plastid"/>
    <property type="evidence" value="ECO:0007005"/>
    <property type="project" value="TAIR"/>
</dbReference>
<dbReference type="GO" id="GO:0005524">
    <property type="term" value="F:ATP binding"/>
    <property type="evidence" value="ECO:0007669"/>
    <property type="project" value="UniProtKB-KW"/>
</dbReference>
<dbReference type="GO" id="GO:0106310">
    <property type="term" value="F:protein serine kinase activity"/>
    <property type="evidence" value="ECO:0007669"/>
    <property type="project" value="RHEA"/>
</dbReference>
<dbReference type="GO" id="GO:0004674">
    <property type="term" value="F:protein serine/threonine kinase activity"/>
    <property type="evidence" value="ECO:0007669"/>
    <property type="project" value="UniProtKB-KW"/>
</dbReference>
<dbReference type="GO" id="GO:0007165">
    <property type="term" value="P:signal transduction"/>
    <property type="evidence" value="ECO:0007669"/>
    <property type="project" value="InterPro"/>
</dbReference>
<dbReference type="CDD" id="cd12195">
    <property type="entry name" value="CIPK_C"/>
    <property type="match status" value="1"/>
</dbReference>
<dbReference type="CDD" id="cd14663">
    <property type="entry name" value="STKc_SnRK3"/>
    <property type="match status" value="1"/>
</dbReference>
<dbReference type="FunFam" id="1.10.510.10:FF:000279">
    <property type="entry name" value="Non-specific serine/threonine protein kinase"/>
    <property type="match status" value="1"/>
</dbReference>
<dbReference type="FunFam" id="3.30.200.20:FF:000096">
    <property type="entry name" value="Non-specific serine/threonine protein kinase"/>
    <property type="match status" value="1"/>
</dbReference>
<dbReference type="FunFam" id="3.30.310.80:FF:000002">
    <property type="entry name" value="Non-specific serine/threonine protein kinase"/>
    <property type="match status" value="1"/>
</dbReference>
<dbReference type="Gene3D" id="3.30.310.80">
    <property type="entry name" value="Kinase associated domain 1, KA1"/>
    <property type="match status" value="1"/>
</dbReference>
<dbReference type="Gene3D" id="3.30.200.20">
    <property type="entry name" value="Phosphorylase Kinase, domain 1"/>
    <property type="match status" value="1"/>
</dbReference>
<dbReference type="Gene3D" id="1.10.510.10">
    <property type="entry name" value="Transferase(Phosphotransferase) domain 1"/>
    <property type="match status" value="1"/>
</dbReference>
<dbReference type="InterPro" id="IPR011009">
    <property type="entry name" value="Kinase-like_dom_sf"/>
</dbReference>
<dbReference type="InterPro" id="IPR018451">
    <property type="entry name" value="NAF/FISL_domain"/>
</dbReference>
<dbReference type="InterPro" id="IPR004041">
    <property type="entry name" value="NAF_dom"/>
</dbReference>
<dbReference type="InterPro" id="IPR000719">
    <property type="entry name" value="Prot_kinase_dom"/>
</dbReference>
<dbReference type="InterPro" id="IPR017441">
    <property type="entry name" value="Protein_kinase_ATP_BS"/>
</dbReference>
<dbReference type="InterPro" id="IPR008271">
    <property type="entry name" value="Ser/Thr_kinase_AS"/>
</dbReference>
<dbReference type="PANTHER" id="PTHR43895">
    <property type="entry name" value="CALCIUM/CALMODULIN-DEPENDENT PROTEIN KINASE KINASE-RELATED"/>
    <property type="match status" value="1"/>
</dbReference>
<dbReference type="PANTHER" id="PTHR43895:SF104">
    <property type="entry name" value="CBL-INTERACTING SERINE_THREONINE-PROTEIN KINASE 3"/>
    <property type="match status" value="1"/>
</dbReference>
<dbReference type="Pfam" id="PF03822">
    <property type="entry name" value="NAF"/>
    <property type="match status" value="1"/>
</dbReference>
<dbReference type="Pfam" id="PF00069">
    <property type="entry name" value="Pkinase"/>
    <property type="match status" value="1"/>
</dbReference>
<dbReference type="SMART" id="SM00220">
    <property type="entry name" value="S_TKc"/>
    <property type="match status" value="1"/>
</dbReference>
<dbReference type="SUPFAM" id="SSF56112">
    <property type="entry name" value="Protein kinase-like (PK-like)"/>
    <property type="match status" value="1"/>
</dbReference>
<dbReference type="PROSITE" id="PS50816">
    <property type="entry name" value="NAF"/>
    <property type="match status" value="1"/>
</dbReference>
<dbReference type="PROSITE" id="PS00107">
    <property type="entry name" value="PROTEIN_KINASE_ATP"/>
    <property type="match status" value="1"/>
</dbReference>
<dbReference type="PROSITE" id="PS50011">
    <property type="entry name" value="PROTEIN_KINASE_DOM"/>
    <property type="match status" value="1"/>
</dbReference>
<dbReference type="PROSITE" id="PS00108">
    <property type="entry name" value="PROTEIN_KINASE_ST"/>
    <property type="match status" value="1"/>
</dbReference>
<reference key="1">
    <citation type="journal article" date="2000" name="Nature">
        <title>Sequence and analysis of chromosome 5 of the plant Arabidopsis thaliana.</title>
        <authorList>
            <person name="Tabata S."/>
            <person name="Kaneko T."/>
            <person name="Nakamura Y."/>
            <person name="Kotani H."/>
            <person name="Kato T."/>
            <person name="Asamizu E."/>
            <person name="Miyajima N."/>
            <person name="Sasamoto S."/>
            <person name="Kimura T."/>
            <person name="Hosouchi T."/>
            <person name="Kawashima K."/>
            <person name="Kohara M."/>
            <person name="Matsumoto M."/>
            <person name="Matsuno A."/>
            <person name="Muraki A."/>
            <person name="Nakayama S."/>
            <person name="Nakazaki N."/>
            <person name="Naruo K."/>
            <person name="Okumura S."/>
            <person name="Shinpo S."/>
            <person name="Takeuchi C."/>
            <person name="Wada T."/>
            <person name="Watanabe A."/>
            <person name="Yamada M."/>
            <person name="Yasuda M."/>
            <person name="Sato S."/>
            <person name="de la Bastide M."/>
            <person name="Huang E."/>
            <person name="Spiegel L."/>
            <person name="Gnoj L."/>
            <person name="O'Shaughnessy A."/>
            <person name="Preston R."/>
            <person name="Habermann K."/>
            <person name="Murray J."/>
            <person name="Johnson D."/>
            <person name="Rohlfing T."/>
            <person name="Nelson J."/>
            <person name="Stoneking T."/>
            <person name="Pepin K."/>
            <person name="Spieth J."/>
            <person name="Sekhon M."/>
            <person name="Armstrong J."/>
            <person name="Becker M."/>
            <person name="Belter E."/>
            <person name="Cordum H."/>
            <person name="Cordes M."/>
            <person name="Courtney L."/>
            <person name="Courtney W."/>
            <person name="Dante M."/>
            <person name="Du H."/>
            <person name="Edwards J."/>
            <person name="Fryman J."/>
            <person name="Haakensen B."/>
            <person name="Lamar E."/>
            <person name="Latreille P."/>
            <person name="Leonard S."/>
            <person name="Meyer R."/>
            <person name="Mulvaney E."/>
            <person name="Ozersky P."/>
            <person name="Riley A."/>
            <person name="Strowmatt C."/>
            <person name="Wagner-McPherson C."/>
            <person name="Wollam A."/>
            <person name="Yoakum M."/>
            <person name="Bell M."/>
            <person name="Dedhia N."/>
            <person name="Parnell L."/>
            <person name="Shah R."/>
            <person name="Rodriguez M."/>
            <person name="Hoon See L."/>
            <person name="Vil D."/>
            <person name="Baker J."/>
            <person name="Kirchoff K."/>
            <person name="Toth K."/>
            <person name="King L."/>
            <person name="Bahret A."/>
            <person name="Miller B."/>
            <person name="Marra M.A."/>
            <person name="Martienssen R."/>
            <person name="McCombie W.R."/>
            <person name="Wilson R.K."/>
            <person name="Murphy G."/>
            <person name="Bancroft I."/>
            <person name="Volckaert G."/>
            <person name="Wambutt R."/>
            <person name="Duesterhoeft A."/>
            <person name="Stiekema W."/>
            <person name="Pohl T."/>
            <person name="Entian K.-D."/>
            <person name="Terryn N."/>
            <person name="Hartley N."/>
            <person name="Bent E."/>
            <person name="Johnson S."/>
            <person name="Langham S.-A."/>
            <person name="McCullagh B."/>
            <person name="Robben J."/>
            <person name="Grymonprez B."/>
            <person name="Zimmermann W."/>
            <person name="Ramsperger U."/>
            <person name="Wedler H."/>
            <person name="Balke K."/>
            <person name="Wedler E."/>
            <person name="Peters S."/>
            <person name="van Staveren M."/>
            <person name="Dirkse W."/>
            <person name="Mooijman P."/>
            <person name="Klein Lankhorst R."/>
            <person name="Weitzenegger T."/>
            <person name="Bothe G."/>
            <person name="Rose M."/>
            <person name="Hauf J."/>
            <person name="Berneiser S."/>
            <person name="Hempel S."/>
            <person name="Feldpausch M."/>
            <person name="Lamberth S."/>
            <person name="Villarroel R."/>
            <person name="Gielen J."/>
            <person name="Ardiles W."/>
            <person name="Bents O."/>
            <person name="Lemcke K."/>
            <person name="Kolesov G."/>
            <person name="Mayer K.F.X."/>
            <person name="Rudd S."/>
            <person name="Schoof H."/>
            <person name="Schueller C."/>
            <person name="Zaccaria P."/>
            <person name="Mewes H.-W."/>
            <person name="Bevan M."/>
            <person name="Fransz P.F."/>
        </authorList>
    </citation>
    <scope>NUCLEOTIDE SEQUENCE [LARGE SCALE GENOMIC DNA]</scope>
    <source>
        <strain>cv. Columbia</strain>
    </source>
</reference>
<reference key="2">
    <citation type="journal article" date="2017" name="Plant J.">
        <title>Araport11: a complete reannotation of the Arabidopsis thaliana reference genome.</title>
        <authorList>
            <person name="Cheng C.Y."/>
            <person name="Krishnakumar V."/>
            <person name="Chan A.P."/>
            <person name="Thibaud-Nissen F."/>
            <person name="Schobel S."/>
            <person name="Town C.D."/>
        </authorList>
    </citation>
    <scope>GENOME REANNOTATION</scope>
    <source>
        <strain>cv. Columbia</strain>
    </source>
</reference>
<reference key="3">
    <citation type="submission" date="2004-06" db="EMBL/GenBank/DDBJ databases">
        <title>Arabidopsis ORF clones.</title>
        <authorList>
            <person name="Cheuk R.F."/>
            <person name="Chen H."/>
            <person name="Kim C.J."/>
            <person name="Shinn P."/>
            <person name="Ecker J.R."/>
        </authorList>
    </citation>
    <scope>NUCLEOTIDE SEQUENCE [LARGE SCALE MRNA] OF 220-439</scope>
    <source>
        <strain>cv. Columbia</strain>
    </source>
</reference>
<reference key="4">
    <citation type="journal article" date="2003" name="Plant Physiol.">
        <title>The Arabidopsis CDPK-SnRK superfamily of protein kinases.</title>
        <authorList>
            <person name="Hrabak E.M."/>
            <person name="Chan C.W.M."/>
            <person name="Gribskov M."/>
            <person name="Harper J.F."/>
            <person name="Choi J.H."/>
            <person name="Halford N."/>
            <person name="Kudla J."/>
            <person name="Luan S."/>
            <person name="Nimmo H.G."/>
            <person name="Sussman M.R."/>
            <person name="Thomas M."/>
            <person name="Walker-Simmons K."/>
            <person name="Zhu J.-K."/>
            <person name="Harmon A.C."/>
        </authorList>
    </citation>
    <scope>GENE FAMILY</scope>
    <scope>NOMENCLATURE</scope>
</reference>
<reference key="5">
    <citation type="journal article" date="2013" name="Mol. Plant">
        <title>The Calcineurin B-like calcium sensors CBL1 and CBL9 together with their interacting protein kinase CIPK26 regulate the Arabidopsis NADPH oxidase RBOHF.</title>
        <authorList>
            <person name="Drerup M.M."/>
            <person name="Schluecking K."/>
            <person name="Hashimoto K."/>
            <person name="Manishankar P."/>
            <person name="Steinhorst L."/>
            <person name="Kuchitsu K."/>
            <person name="Kudla J."/>
        </authorList>
    </citation>
    <scope>FUNCTION</scope>
    <scope>INTERACTION WITH RBOHF</scope>
    <scope>SUBCELLULAR LOCATION</scope>
</reference>
<sequence length="439" mass="49629">MNRPKVQRRVGKYEVGKTLGQGTFAKVRCAVNTETGERVALKILDKEKVLKHKMAEQIRREICTMKLINHPNVVRLYEVLASKTKIYIVLEFGTGGELFDKIVHDGRLKEENARKYFQQLINAVDYCHSRGVYHRDLKPENLLLDAQGNLKVSDFGLSALSRQVRGDGLLHTACGTPNYAAPEVLNDQGYDGATADLWSCGVILFVLLAGYLPFEDSNLMTLYKKIIAGEYHCPPWLSPGAKNLIVRILDPNPMTRITIPEVLGDAWFKKNYKPAVFEEKEEANLDDVDAVFKDSEEHHVTEKKEEQPTSMNAFELISMSRALDLGNLFEEEEGFKRETRFAAKGAANDLVQKIEEASKPLGFDIQKKNYKMRLENVTAGRKGNLRVATEIFQVSPSLHMIEVRKTKGDTLEFHKFYKKLSTSLNDVVWKSGESSGLSK</sequence>
<proteinExistence type="evidence at protein level"/>
<keyword id="KW-0067">ATP-binding</keyword>
<keyword id="KW-1003">Cell membrane</keyword>
<keyword id="KW-0418">Kinase</keyword>
<keyword id="KW-0464">Manganese</keyword>
<keyword id="KW-0472">Membrane</keyword>
<keyword id="KW-0547">Nucleotide-binding</keyword>
<keyword id="KW-0597">Phosphoprotein</keyword>
<keyword id="KW-1185">Reference proteome</keyword>
<keyword id="KW-0723">Serine/threonine-protein kinase</keyword>
<keyword id="KW-0808">Transferase</keyword>
<protein>
    <recommendedName>
        <fullName>CBL-interacting serine/threonine-protein kinase 26</fullName>
        <ecNumber>2.7.11.1</ecNumber>
    </recommendedName>
    <alternativeName>
        <fullName>SNF1-related kinase 3.26</fullName>
    </alternativeName>
    <alternativeName>
        <fullName>SOS2-like protein kinase PKS26</fullName>
    </alternativeName>
</protein>
<gene>
    <name type="primary">CIPK26</name>
    <name type="synonym">PKS26</name>
    <name type="synonym">SnRK3.26</name>
    <name type="ordered locus">At5g21326</name>
    <name type="ORF">F13M11</name>
</gene>
<feature type="chain" id="PRO_0000337226" description="CBL-interacting serine/threonine-protein kinase 26">
    <location>
        <begin position="1"/>
        <end position="439"/>
    </location>
</feature>
<feature type="domain" description="Protein kinase" evidence="4">
    <location>
        <begin position="13"/>
        <end position="268"/>
    </location>
</feature>
<feature type="domain" description="NAF" evidence="5">
    <location>
        <begin position="306"/>
        <end position="330"/>
    </location>
</feature>
<feature type="region of interest" description="Activation loop" evidence="1">
    <location>
        <begin position="154"/>
        <end position="183"/>
    </location>
</feature>
<feature type="region of interest" description="PPI" evidence="1">
    <location>
        <begin position="336"/>
        <end position="365"/>
    </location>
</feature>
<feature type="active site" description="Proton acceptor" evidence="4 6">
    <location>
        <position position="136"/>
    </location>
</feature>
<feature type="binding site" evidence="4">
    <location>
        <begin position="19"/>
        <end position="27"/>
    </location>
    <ligand>
        <name>ATP</name>
        <dbReference type="ChEBI" id="CHEBI:30616"/>
    </ligand>
</feature>
<feature type="binding site" evidence="4">
    <location>
        <position position="42"/>
    </location>
    <ligand>
        <name>ATP</name>
        <dbReference type="ChEBI" id="CHEBI:30616"/>
    </ligand>
</feature>
<feature type="modified residue" description="Phosphoserine" evidence="3">
    <location>
        <position position="158"/>
    </location>
</feature>
<feature type="modified residue" description="Phosphothreonine" evidence="2">
    <location>
        <position position="172"/>
    </location>
</feature>
<name>CIPKQ_ARATH</name>
<organism>
    <name type="scientific">Arabidopsis thaliana</name>
    <name type="common">Mouse-ear cress</name>
    <dbReference type="NCBI Taxonomy" id="3702"/>
    <lineage>
        <taxon>Eukaryota</taxon>
        <taxon>Viridiplantae</taxon>
        <taxon>Streptophyta</taxon>
        <taxon>Embryophyta</taxon>
        <taxon>Tracheophyta</taxon>
        <taxon>Spermatophyta</taxon>
        <taxon>Magnoliopsida</taxon>
        <taxon>eudicotyledons</taxon>
        <taxon>Gunneridae</taxon>
        <taxon>Pentapetalae</taxon>
        <taxon>rosids</taxon>
        <taxon>malvids</taxon>
        <taxon>Brassicales</taxon>
        <taxon>Brassicaceae</taxon>
        <taxon>Camelineae</taxon>
        <taxon>Arabidopsis</taxon>
    </lineage>
</organism>
<evidence type="ECO:0000250" key="1"/>
<evidence type="ECO:0000250" key="2">
    <source>
        <dbReference type="UniProtKB" id="Q38997"/>
    </source>
</evidence>
<evidence type="ECO:0000250" key="3">
    <source>
        <dbReference type="UniProtKB" id="Q93V58"/>
    </source>
</evidence>
<evidence type="ECO:0000255" key="4">
    <source>
        <dbReference type="PROSITE-ProRule" id="PRU00159"/>
    </source>
</evidence>
<evidence type="ECO:0000255" key="5">
    <source>
        <dbReference type="PROSITE-ProRule" id="PRU00256"/>
    </source>
</evidence>
<evidence type="ECO:0000255" key="6">
    <source>
        <dbReference type="PROSITE-ProRule" id="PRU10027"/>
    </source>
</evidence>
<evidence type="ECO:0000269" key="7">
    <source>
    </source>
</evidence>
<evidence type="ECO:0000305" key="8"/>